<reference key="1">
    <citation type="submission" date="2007-05" db="EMBL/GenBank/DDBJ databases">
        <title>Complete sequence of Geobacter uraniireducens Rf4.</title>
        <authorList>
            <consortium name="US DOE Joint Genome Institute"/>
            <person name="Copeland A."/>
            <person name="Lucas S."/>
            <person name="Lapidus A."/>
            <person name="Barry K."/>
            <person name="Detter J.C."/>
            <person name="Glavina del Rio T."/>
            <person name="Hammon N."/>
            <person name="Israni S."/>
            <person name="Dalin E."/>
            <person name="Tice H."/>
            <person name="Pitluck S."/>
            <person name="Chertkov O."/>
            <person name="Brettin T."/>
            <person name="Bruce D."/>
            <person name="Han C."/>
            <person name="Schmutz J."/>
            <person name="Larimer F."/>
            <person name="Land M."/>
            <person name="Hauser L."/>
            <person name="Kyrpides N."/>
            <person name="Mikhailova N."/>
            <person name="Shelobolina E."/>
            <person name="Aklujkar M."/>
            <person name="Lovley D."/>
            <person name="Richardson P."/>
        </authorList>
    </citation>
    <scope>NUCLEOTIDE SEQUENCE [LARGE SCALE GENOMIC DNA]</scope>
    <source>
        <strain>ATCC BAA-1134 / JCM 13001 / Rf4</strain>
    </source>
</reference>
<protein>
    <recommendedName>
        <fullName evidence="1">Malate dehydrogenase</fullName>
        <ecNumber evidence="1">1.1.1.37</ecNumber>
    </recommendedName>
</protein>
<gene>
    <name evidence="1" type="primary">mdh</name>
    <name type="ordered locus">Gura_2193</name>
</gene>
<feature type="chain" id="PRO_1000081363" description="Malate dehydrogenase">
    <location>
        <begin position="1"/>
        <end position="318"/>
    </location>
</feature>
<feature type="active site" description="Proton acceptor" evidence="1">
    <location>
        <position position="176"/>
    </location>
</feature>
<feature type="binding site" evidence="1">
    <location>
        <begin position="10"/>
        <end position="15"/>
    </location>
    <ligand>
        <name>NAD(+)</name>
        <dbReference type="ChEBI" id="CHEBI:57540"/>
    </ligand>
</feature>
<feature type="binding site" evidence="1">
    <location>
        <position position="34"/>
    </location>
    <ligand>
        <name>NAD(+)</name>
        <dbReference type="ChEBI" id="CHEBI:57540"/>
    </ligand>
</feature>
<feature type="binding site" evidence="1">
    <location>
        <position position="83"/>
    </location>
    <ligand>
        <name>substrate</name>
    </ligand>
</feature>
<feature type="binding site" evidence="1">
    <location>
        <position position="89"/>
    </location>
    <ligand>
        <name>substrate</name>
    </ligand>
</feature>
<feature type="binding site" evidence="1">
    <location>
        <position position="96"/>
    </location>
    <ligand>
        <name>NAD(+)</name>
        <dbReference type="ChEBI" id="CHEBI:57540"/>
    </ligand>
</feature>
<feature type="binding site" evidence="1">
    <location>
        <begin position="119"/>
        <end position="121"/>
    </location>
    <ligand>
        <name>NAD(+)</name>
        <dbReference type="ChEBI" id="CHEBI:57540"/>
    </ligand>
</feature>
<feature type="binding site" evidence="1">
    <location>
        <position position="121"/>
    </location>
    <ligand>
        <name>substrate</name>
    </ligand>
</feature>
<feature type="binding site" evidence="1">
    <location>
        <position position="152"/>
    </location>
    <ligand>
        <name>substrate</name>
    </ligand>
</feature>
<dbReference type="EC" id="1.1.1.37" evidence="1"/>
<dbReference type="EMBL" id="CP000698">
    <property type="protein sequence ID" value="ABQ26380.1"/>
    <property type="molecule type" value="Genomic_DNA"/>
</dbReference>
<dbReference type="RefSeq" id="WP_011939079.1">
    <property type="nucleotide sequence ID" value="NC_009483.1"/>
</dbReference>
<dbReference type="SMR" id="A5G3L2"/>
<dbReference type="STRING" id="351605.Gura_2193"/>
<dbReference type="KEGG" id="gur:Gura_2193"/>
<dbReference type="HOGENOM" id="CLU_045401_2_1_7"/>
<dbReference type="OrthoDB" id="9802969at2"/>
<dbReference type="Proteomes" id="UP000006695">
    <property type="component" value="Chromosome"/>
</dbReference>
<dbReference type="GO" id="GO:0004459">
    <property type="term" value="F:L-lactate dehydrogenase activity"/>
    <property type="evidence" value="ECO:0007669"/>
    <property type="project" value="TreeGrafter"/>
</dbReference>
<dbReference type="GO" id="GO:0030060">
    <property type="term" value="F:L-malate dehydrogenase (NAD+) activity"/>
    <property type="evidence" value="ECO:0007669"/>
    <property type="project" value="UniProtKB-UniRule"/>
</dbReference>
<dbReference type="GO" id="GO:0006089">
    <property type="term" value="P:lactate metabolic process"/>
    <property type="evidence" value="ECO:0007669"/>
    <property type="project" value="TreeGrafter"/>
</dbReference>
<dbReference type="GO" id="GO:0006099">
    <property type="term" value="P:tricarboxylic acid cycle"/>
    <property type="evidence" value="ECO:0007669"/>
    <property type="project" value="UniProtKB-UniRule"/>
</dbReference>
<dbReference type="CDD" id="cd01339">
    <property type="entry name" value="LDH-like_MDH"/>
    <property type="match status" value="1"/>
</dbReference>
<dbReference type="FunFam" id="3.40.50.720:FF:000018">
    <property type="entry name" value="Malate dehydrogenase"/>
    <property type="match status" value="1"/>
</dbReference>
<dbReference type="FunFam" id="3.90.110.10:FF:000004">
    <property type="entry name" value="Malate dehydrogenase"/>
    <property type="match status" value="1"/>
</dbReference>
<dbReference type="Gene3D" id="3.90.110.10">
    <property type="entry name" value="Lactate dehydrogenase/glycoside hydrolase, family 4, C-terminal"/>
    <property type="match status" value="1"/>
</dbReference>
<dbReference type="Gene3D" id="3.40.50.720">
    <property type="entry name" value="NAD(P)-binding Rossmann-like Domain"/>
    <property type="match status" value="1"/>
</dbReference>
<dbReference type="HAMAP" id="MF_00487">
    <property type="entry name" value="Malate_dehydrog_3"/>
    <property type="match status" value="1"/>
</dbReference>
<dbReference type="InterPro" id="IPR001557">
    <property type="entry name" value="L-lactate/malate_DH"/>
</dbReference>
<dbReference type="InterPro" id="IPR022383">
    <property type="entry name" value="Lactate/malate_DH_C"/>
</dbReference>
<dbReference type="InterPro" id="IPR001236">
    <property type="entry name" value="Lactate/malate_DH_N"/>
</dbReference>
<dbReference type="InterPro" id="IPR015955">
    <property type="entry name" value="Lactate_DH/Glyco_Ohase_4_C"/>
</dbReference>
<dbReference type="InterPro" id="IPR011275">
    <property type="entry name" value="Malate_DH_type3"/>
</dbReference>
<dbReference type="InterPro" id="IPR036291">
    <property type="entry name" value="NAD(P)-bd_dom_sf"/>
</dbReference>
<dbReference type="NCBIfam" id="TIGR01763">
    <property type="entry name" value="MalateDH_bact"/>
    <property type="match status" value="1"/>
</dbReference>
<dbReference type="NCBIfam" id="NF004863">
    <property type="entry name" value="PRK06223.1"/>
    <property type="match status" value="1"/>
</dbReference>
<dbReference type="PANTHER" id="PTHR43128">
    <property type="entry name" value="L-2-HYDROXYCARBOXYLATE DEHYDROGENASE (NAD(P)(+))"/>
    <property type="match status" value="1"/>
</dbReference>
<dbReference type="PANTHER" id="PTHR43128:SF16">
    <property type="entry name" value="L-LACTATE DEHYDROGENASE"/>
    <property type="match status" value="1"/>
</dbReference>
<dbReference type="Pfam" id="PF02866">
    <property type="entry name" value="Ldh_1_C"/>
    <property type="match status" value="1"/>
</dbReference>
<dbReference type="Pfam" id="PF00056">
    <property type="entry name" value="Ldh_1_N"/>
    <property type="match status" value="1"/>
</dbReference>
<dbReference type="PIRSF" id="PIRSF000102">
    <property type="entry name" value="Lac_mal_DH"/>
    <property type="match status" value="1"/>
</dbReference>
<dbReference type="PRINTS" id="PR00086">
    <property type="entry name" value="LLDHDRGNASE"/>
</dbReference>
<dbReference type="SUPFAM" id="SSF56327">
    <property type="entry name" value="LDH C-terminal domain-like"/>
    <property type="match status" value="1"/>
</dbReference>
<dbReference type="SUPFAM" id="SSF51735">
    <property type="entry name" value="NAD(P)-binding Rossmann-fold domains"/>
    <property type="match status" value="1"/>
</dbReference>
<sequence>MARKKISLIGGGQIGGVLAQLSALRELGDVVLFDIVEGLPQGKTLDIAEASPVDNFDVALSGANDYADIKGSDIVIVTAGLPRKPGMSRDDLIATNAKIMQSVSEGIKQYAPNAFVIVISNPLDAMVTLCQKITGFPSNRVMGMAGVLDSARFAAFIAWELGVSVKDVNAMVLGGHGDTMVPIIRYANVNGVPVMELLERKYNNDKAKAKEVMAALVKRTQGAGGEVVGLLKTGSAFYSPASSAIAMAESILRDQKRLLPVCALLNGEFGVKGYYVGVPCILGSNGIEKIVEFSLDAEEQAMFDNSVAAVKELVDSMK</sequence>
<proteinExistence type="inferred from homology"/>
<accession>A5G3L2</accession>
<organism>
    <name type="scientific">Geotalea uraniireducens (strain Rf4)</name>
    <name type="common">Geobacter uraniireducens</name>
    <dbReference type="NCBI Taxonomy" id="351605"/>
    <lineage>
        <taxon>Bacteria</taxon>
        <taxon>Pseudomonadati</taxon>
        <taxon>Thermodesulfobacteriota</taxon>
        <taxon>Desulfuromonadia</taxon>
        <taxon>Geobacterales</taxon>
        <taxon>Geobacteraceae</taxon>
        <taxon>Geotalea</taxon>
    </lineage>
</organism>
<evidence type="ECO:0000255" key="1">
    <source>
        <dbReference type="HAMAP-Rule" id="MF_00487"/>
    </source>
</evidence>
<name>MDH_GEOUR</name>
<keyword id="KW-0520">NAD</keyword>
<keyword id="KW-0560">Oxidoreductase</keyword>
<keyword id="KW-1185">Reference proteome</keyword>
<keyword id="KW-0816">Tricarboxylic acid cycle</keyword>
<comment type="function">
    <text evidence="1">Catalyzes the reversible oxidation of malate to oxaloacetate.</text>
</comment>
<comment type="catalytic activity">
    <reaction evidence="1">
        <text>(S)-malate + NAD(+) = oxaloacetate + NADH + H(+)</text>
        <dbReference type="Rhea" id="RHEA:21432"/>
        <dbReference type="ChEBI" id="CHEBI:15378"/>
        <dbReference type="ChEBI" id="CHEBI:15589"/>
        <dbReference type="ChEBI" id="CHEBI:16452"/>
        <dbReference type="ChEBI" id="CHEBI:57540"/>
        <dbReference type="ChEBI" id="CHEBI:57945"/>
        <dbReference type="EC" id="1.1.1.37"/>
    </reaction>
</comment>
<comment type="similarity">
    <text evidence="1">Belongs to the LDH/MDH superfamily. MDH type 3 family.</text>
</comment>